<keyword id="KW-0170">Cobalt</keyword>
<keyword id="KW-0456">Lyase</keyword>
<keyword id="KW-0464">Manganese</keyword>
<keyword id="KW-1185">Reference proteome</keyword>
<feature type="chain" id="PRO_0000352367" description="Inosose dehydratase">
    <location>
        <begin position="1"/>
        <end position="308"/>
    </location>
</feature>
<gene>
    <name evidence="1" type="primary">iolE</name>
    <name type="ordered locus">GK1890</name>
</gene>
<sequence length="308" mass="35448">MEKTVNPFRIGIAPISWVNDDIPGLGDHYTQDQVLSEMAELGYVATEMGRLFSQDPPSLRAKLNQYGIELASKFIGVLFSDRSRLEEELKTFRSWAEYLHDMGCKYAIVCEMGGSMHWDPRRAPEEKTIQRLTDSEWESLVDGLHRAAHICQELGMKLVYHFHAGTVVETAEEIDRLMELTDPNLVHLLYDTGHALYGGYDPVELLHRYADRIQYVHLKDVRHDVLELVRREQLDFRTAVLRGMFTVPGDGCIDFVPIFAKLIEMDYNGWIIVEAEQDPAVAHPYTYAKMAKEYIDRLVHHLLAAQKR</sequence>
<comment type="function">
    <text evidence="1">Catalyzes the dehydration of inosose (2-keto-myo-inositol, 2KMI or 2,4,6/3,5-pentahydroxycyclohexanone) to 3D-(3,5/4)-trihydroxycyclohexane-1,2-dione (D-2,3-diketo-4-deoxy-epi-inositol).</text>
</comment>
<comment type="catalytic activity">
    <reaction evidence="1">
        <text>scyllo-inosose = 3D-3,5/4-trihydroxycyclohexane-1,2-dione + H2O</text>
        <dbReference type="Rhea" id="RHEA:14065"/>
        <dbReference type="ChEBI" id="CHEBI:15377"/>
        <dbReference type="ChEBI" id="CHEBI:17811"/>
        <dbReference type="ChEBI" id="CHEBI:28446"/>
        <dbReference type="EC" id="4.2.1.44"/>
    </reaction>
</comment>
<comment type="cofactor">
    <cofactor evidence="1">
        <name>glutathione</name>
        <dbReference type="ChEBI" id="CHEBI:57925"/>
    </cofactor>
</comment>
<comment type="cofactor">
    <cofactor evidence="1">
        <name>Co(2+)</name>
        <dbReference type="ChEBI" id="CHEBI:48828"/>
    </cofactor>
    <cofactor evidence="1">
        <name>Mn(2+)</name>
        <dbReference type="ChEBI" id="CHEBI:29035"/>
    </cofactor>
</comment>
<comment type="pathway">
    <text evidence="1">Polyol metabolism; myo-inositol degradation into acetyl-CoA; acetyl-CoA from myo-inositol: step 2/7.</text>
</comment>
<comment type="similarity">
    <text evidence="1">Belongs to the IolE/MocC family.</text>
</comment>
<name>IOLE_GEOKA</name>
<protein>
    <recommendedName>
        <fullName evidence="1">Inosose dehydratase</fullName>
        <ecNumber evidence="1">4.2.1.44</ecNumber>
    </recommendedName>
    <alternativeName>
        <fullName evidence="1">2-keto-myo-inositol dehydratase</fullName>
        <shortName evidence="1">2KMI dehydratase</shortName>
    </alternativeName>
</protein>
<accession>Q5KYR1</accession>
<organism>
    <name type="scientific">Geobacillus kaustophilus (strain HTA426)</name>
    <dbReference type="NCBI Taxonomy" id="235909"/>
    <lineage>
        <taxon>Bacteria</taxon>
        <taxon>Bacillati</taxon>
        <taxon>Bacillota</taxon>
        <taxon>Bacilli</taxon>
        <taxon>Bacillales</taxon>
        <taxon>Anoxybacillaceae</taxon>
        <taxon>Geobacillus</taxon>
        <taxon>Geobacillus thermoleovorans group</taxon>
    </lineage>
</organism>
<proteinExistence type="inferred from homology"/>
<reference key="1">
    <citation type="journal article" date="2004" name="Nucleic Acids Res.">
        <title>Thermoadaptation trait revealed by the genome sequence of thermophilic Geobacillus kaustophilus.</title>
        <authorList>
            <person name="Takami H."/>
            <person name="Takaki Y."/>
            <person name="Chee G.-J."/>
            <person name="Nishi S."/>
            <person name="Shimamura S."/>
            <person name="Suzuki H."/>
            <person name="Matsui S."/>
            <person name="Uchiyama I."/>
        </authorList>
    </citation>
    <scope>NUCLEOTIDE SEQUENCE [LARGE SCALE GENOMIC DNA]</scope>
    <source>
        <strain>HTA426</strain>
    </source>
</reference>
<dbReference type="EC" id="4.2.1.44" evidence="1"/>
<dbReference type="EMBL" id="BA000043">
    <property type="protein sequence ID" value="BAD76175.1"/>
    <property type="molecule type" value="Genomic_DNA"/>
</dbReference>
<dbReference type="RefSeq" id="WP_011231380.1">
    <property type="nucleotide sequence ID" value="NC_006510.1"/>
</dbReference>
<dbReference type="SMR" id="Q5KYR1"/>
<dbReference type="STRING" id="235909.GK1890"/>
<dbReference type="GeneID" id="32063757"/>
<dbReference type="KEGG" id="gka:GK1890"/>
<dbReference type="eggNOG" id="COG1082">
    <property type="taxonomic scope" value="Bacteria"/>
</dbReference>
<dbReference type="HOGENOM" id="CLU_059523_0_0_9"/>
<dbReference type="UniPathway" id="UPA00076">
    <property type="reaction ID" value="UER00144"/>
</dbReference>
<dbReference type="Proteomes" id="UP000001172">
    <property type="component" value="Chromosome"/>
</dbReference>
<dbReference type="GO" id="GO:0030145">
    <property type="term" value="F:manganese ion binding"/>
    <property type="evidence" value="ECO:0007669"/>
    <property type="project" value="UniProtKB-UniRule"/>
</dbReference>
<dbReference type="GO" id="GO:0050114">
    <property type="term" value="F:myo-inosose-2 dehydratase activity"/>
    <property type="evidence" value="ECO:0007669"/>
    <property type="project" value="UniProtKB-UniRule"/>
</dbReference>
<dbReference type="GO" id="GO:0019310">
    <property type="term" value="P:inositol catabolic process"/>
    <property type="evidence" value="ECO:0007669"/>
    <property type="project" value="UniProtKB-UniRule"/>
</dbReference>
<dbReference type="Gene3D" id="3.20.20.150">
    <property type="entry name" value="Divalent-metal-dependent TIM barrel enzymes"/>
    <property type="match status" value="1"/>
</dbReference>
<dbReference type="HAMAP" id="MF_01672">
    <property type="entry name" value="IolE"/>
    <property type="match status" value="1"/>
</dbReference>
<dbReference type="InterPro" id="IPR023952">
    <property type="entry name" value="IolE"/>
</dbReference>
<dbReference type="InterPro" id="IPR030823">
    <property type="entry name" value="IolE/MocC"/>
</dbReference>
<dbReference type="InterPro" id="IPR050312">
    <property type="entry name" value="IolE/XylAMocC-like"/>
</dbReference>
<dbReference type="InterPro" id="IPR036237">
    <property type="entry name" value="Xyl_isomerase-like_sf"/>
</dbReference>
<dbReference type="InterPro" id="IPR013022">
    <property type="entry name" value="Xyl_isomerase-like_TIM-brl"/>
</dbReference>
<dbReference type="NCBIfam" id="TIGR04379">
    <property type="entry name" value="myo_inos_iolE"/>
    <property type="match status" value="1"/>
</dbReference>
<dbReference type="PANTHER" id="PTHR12110">
    <property type="entry name" value="HYDROXYPYRUVATE ISOMERASE"/>
    <property type="match status" value="1"/>
</dbReference>
<dbReference type="PANTHER" id="PTHR12110:SF41">
    <property type="entry name" value="INOSOSE DEHYDRATASE"/>
    <property type="match status" value="1"/>
</dbReference>
<dbReference type="Pfam" id="PF01261">
    <property type="entry name" value="AP_endonuc_2"/>
    <property type="match status" value="1"/>
</dbReference>
<dbReference type="SUPFAM" id="SSF51658">
    <property type="entry name" value="Xylose isomerase-like"/>
    <property type="match status" value="1"/>
</dbReference>
<evidence type="ECO:0000255" key="1">
    <source>
        <dbReference type="HAMAP-Rule" id="MF_01672"/>
    </source>
</evidence>